<protein>
    <recommendedName>
        <fullName evidence="2">Translation initiation factor IF-2</fullName>
    </recommendedName>
</protein>
<gene>
    <name evidence="2" type="primary">infB</name>
    <name type="ordered locus">A1E_02210</name>
</gene>
<accession>A8EYF4</accession>
<keyword id="KW-0963">Cytoplasm</keyword>
<keyword id="KW-0342">GTP-binding</keyword>
<keyword id="KW-0396">Initiation factor</keyword>
<keyword id="KW-0547">Nucleotide-binding</keyword>
<keyword id="KW-0648">Protein biosynthesis</keyword>
<proteinExistence type="inferred from homology"/>
<organism>
    <name type="scientific">Rickettsia canadensis (strain McKiel)</name>
    <dbReference type="NCBI Taxonomy" id="293613"/>
    <lineage>
        <taxon>Bacteria</taxon>
        <taxon>Pseudomonadati</taxon>
        <taxon>Pseudomonadota</taxon>
        <taxon>Alphaproteobacteria</taxon>
        <taxon>Rickettsiales</taxon>
        <taxon>Rickettsiaceae</taxon>
        <taxon>Rickettsieae</taxon>
        <taxon>Rickettsia</taxon>
        <taxon>belli group</taxon>
    </lineage>
</organism>
<dbReference type="EMBL" id="CP000409">
    <property type="protein sequence ID" value="ABV73387.1"/>
    <property type="molecule type" value="Genomic_DNA"/>
</dbReference>
<dbReference type="RefSeq" id="WP_012148585.1">
    <property type="nucleotide sequence ID" value="NC_009879.1"/>
</dbReference>
<dbReference type="SMR" id="A8EYF4"/>
<dbReference type="STRING" id="293613.A1E_02210"/>
<dbReference type="KEGG" id="rcm:A1E_02210"/>
<dbReference type="eggNOG" id="COG0532">
    <property type="taxonomic scope" value="Bacteria"/>
</dbReference>
<dbReference type="HOGENOM" id="CLU_006301_10_2_5"/>
<dbReference type="Proteomes" id="UP000007056">
    <property type="component" value="Chromosome"/>
</dbReference>
<dbReference type="GO" id="GO:0005737">
    <property type="term" value="C:cytoplasm"/>
    <property type="evidence" value="ECO:0007669"/>
    <property type="project" value="UniProtKB-SubCell"/>
</dbReference>
<dbReference type="GO" id="GO:0005525">
    <property type="term" value="F:GTP binding"/>
    <property type="evidence" value="ECO:0007669"/>
    <property type="project" value="UniProtKB-KW"/>
</dbReference>
<dbReference type="GO" id="GO:0003924">
    <property type="term" value="F:GTPase activity"/>
    <property type="evidence" value="ECO:0007669"/>
    <property type="project" value="UniProtKB-UniRule"/>
</dbReference>
<dbReference type="GO" id="GO:0097216">
    <property type="term" value="F:guanosine tetraphosphate binding"/>
    <property type="evidence" value="ECO:0007669"/>
    <property type="project" value="UniProtKB-ARBA"/>
</dbReference>
<dbReference type="GO" id="GO:0003743">
    <property type="term" value="F:translation initiation factor activity"/>
    <property type="evidence" value="ECO:0007669"/>
    <property type="project" value="UniProtKB-UniRule"/>
</dbReference>
<dbReference type="CDD" id="cd01887">
    <property type="entry name" value="IF2_eIF5B"/>
    <property type="match status" value="1"/>
</dbReference>
<dbReference type="CDD" id="cd03702">
    <property type="entry name" value="IF2_mtIF2_II"/>
    <property type="match status" value="1"/>
</dbReference>
<dbReference type="CDD" id="cd03692">
    <property type="entry name" value="mtIF2_IVc"/>
    <property type="match status" value="1"/>
</dbReference>
<dbReference type="FunFam" id="2.40.30.10:FF:000008">
    <property type="entry name" value="Translation initiation factor IF-2"/>
    <property type="match status" value="1"/>
</dbReference>
<dbReference type="FunFam" id="2.40.30.10:FF:000054">
    <property type="entry name" value="Translation initiation factor IF-2"/>
    <property type="match status" value="1"/>
</dbReference>
<dbReference type="FunFam" id="3.40.50.10050:FF:000001">
    <property type="entry name" value="Translation initiation factor IF-2"/>
    <property type="match status" value="1"/>
</dbReference>
<dbReference type="FunFam" id="3.40.50.300:FF:000019">
    <property type="entry name" value="Translation initiation factor IF-2"/>
    <property type="match status" value="1"/>
</dbReference>
<dbReference type="Gene3D" id="3.40.50.300">
    <property type="entry name" value="P-loop containing nucleotide triphosphate hydrolases"/>
    <property type="match status" value="1"/>
</dbReference>
<dbReference type="Gene3D" id="2.40.30.10">
    <property type="entry name" value="Translation factors"/>
    <property type="match status" value="2"/>
</dbReference>
<dbReference type="Gene3D" id="3.40.50.10050">
    <property type="entry name" value="Translation initiation factor IF- 2, domain 3"/>
    <property type="match status" value="1"/>
</dbReference>
<dbReference type="HAMAP" id="MF_00100_B">
    <property type="entry name" value="IF_2_B"/>
    <property type="match status" value="1"/>
</dbReference>
<dbReference type="InterPro" id="IPR053905">
    <property type="entry name" value="EF-G-like_DII"/>
</dbReference>
<dbReference type="InterPro" id="IPR004161">
    <property type="entry name" value="EFTu-like_2"/>
</dbReference>
<dbReference type="InterPro" id="IPR044145">
    <property type="entry name" value="IF2_II"/>
</dbReference>
<dbReference type="InterPro" id="IPR006847">
    <property type="entry name" value="IF2_N"/>
</dbReference>
<dbReference type="InterPro" id="IPR027417">
    <property type="entry name" value="P-loop_NTPase"/>
</dbReference>
<dbReference type="InterPro" id="IPR005225">
    <property type="entry name" value="Small_GTP-bd"/>
</dbReference>
<dbReference type="InterPro" id="IPR000795">
    <property type="entry name" value="T_Tr_GTP-bd_dom"/>
</dbReference>
<dbReference type="InterPro" id="IPR000178">
    <property type="entry name" value="TF_IF2_bacterial-like"/>
</dbReference>
<dbReference type="InterPro" id="IPR015760">
    <property type="entry name" value="TIF_IF2"/>
</dbReference>
<dbReference type="InterPro" id="IPR023115">
    <property type="entry name" value="TIF_IF2_dom3"/>
</dbReference>
<dbReference type="InterPro" id="IPR036925">
    <property type="entry name" value="TIF_IF2_dom3_sf"/>
</dbReference>
<dbReference type="InterPro" id="IPR009000">
    <property type="entry name" value="Transl_B-barrel_sf"/>
</dbReference>
<dbReference type="NCBIfam" id="TIGR00487">
    <property type="entry name" value="IF-2"/>
    <property type="match status" value="1"/>
</dbReference>
<dbReference type="NCBIfam" id="TIGR00231">
    <property type="entry name" value="small_GTP"/>
    <property type="match status" value="1"/>
</dbReference>
<dbReference type="PANTHER" id="PTHR43381:SF5">
    <property type="entry name" value="TR-TYPE G DOMAIN-CONTAINING PROTEIN"/>
    <property type="match status" value="1"/>
</dbReference>
<dbReference type="PANTHER" id="PTHR43381">
    <property type="entry name" value="TRANSLATION INITIATION FACTOR IF-2-RELATED"/>
    <property type="match status" value="1"/>
</dbReference>
<dbReference type="Pfam" id="PF22042">
    <property type="entry name" value="EF-G_D2"/>
    <property type="match status" value="1"/>
</dbReference>
<dbReference type="Pfam" id="PF00009">
    <property type="entry name" value="GTP_EFTU"/>
    <property type="match status" value="1"/>
</dbReference>
<dbReference type="Pfam" id="PF03144">
    <property type="entry name" value="GTP_EFTU_D2"/>
    <property type="match status" value="1"/>
</dbReference>
<dbReference type="Pfam" id="PF11987">
    <property type="entry name" value="IF-2"/>
    <property type="match status" value="1"/>
</dbReference>
<dbReference type="Pfam" id="PF04760">
    <property type="entry name" value="IF2_N"/>
    <property type="match status" value="1"/>
</dbReference>
<dbReference type="SUPFAM" id="SSF52156">
    <property type="entry name" value="Initiation factor IF2/eIF5b, domain 3"/>
    <property type="match status" value="1"/>
</dbReference>
<dbReference type="SUPFAM" id="SSF52540">
    <property type="entry name" value="P-loop containing nucleoside triphosphate hydrolases"/>
    <property type="match status" value="1"/>
</dbReference>
<dbReference type="SUPFAM" id="SSF50447">
    <property type="entry name" value="Translation proteins"/>
    <property type="match status" value="2"/>
</dbReference>
<dbReference type="PROSITE" id="PS51722">
    <property type="entry name" value="G_TR_2"/>
    <property type="match status" value="1"/>
</dbReference>
<dbReference type="PROSITE" id="PS01176">
    <property type="entry name" value="IF2"/>
    <property type="match status" value="1"/>
</dbReference>
<evidence type="ECO:0000250" key="1"/>
<evidence type="ECO:0000255" key="2">
    <source>
        <dbReference type="HAMAP-Rule" id="MF_00100"/>
    </source>
</evidence>
<reference key="1">
    <citation type="submission" date="2007-09" db="EMBL/GenBank/DDBJ databases">
        <title>Complete genome sequence of Rickettsia canadensis.</title>
        <authorList>
            <person name="Madan A."/>
            <person name="Fahey J."/>
            <person name="Helton E."/>
            <person name="Ketteman M."/>
            <person name="Madan A."/>
            <person name="Rodrigues S."/>
            <person name="Sanchez A."/>
            <person name="Whiting M."/>
            <person name="Dasch G."/>
            <person name="Eremeeva M."/>
        </authorList>
    </citation>
    <scope>NUCLEOTIDE SEQUENCE [LARGE SCALE GENOMIC DNA]</scope>
    <source>
        <strain>McKiel</strain>
    </source>
</reference>
<comment type="function">
    <text evidence="2">One of the essential components for the initiation of protein synthesis. Protects formylmethionyl-tRNA from spontaneous hydrolysis and promotes its binding to the 30S ribosomal subunits. Also involved in the hydrolysis of GTP during the formation of the 70S ribosomal complex.</text>
</comment>
<comment type="subcellular location">
    <subcellularLocation>
        <location evidence="2">Cytoplasm</location>
    </subcellularLocation>
</comment>
<comment type="similarity">
    <text evidence="2">Belongs to the TRAFAC class translation factor GTPase superfamily. Classic translation factor GTPase family. IF-2 subfamily.</text>
</comment>
<sequence length="833" mass="91534">MTDNQEIKPKKLTLGNSKLSLNKSFDSLTGAQSFVNAKSKTLVEVRKSSIGSTTTISLNKERNNLDQTVIDANKEEFNRRLSILKKAAEQSKLNDPSQISTLSKLASINQSTNLKIETLETDKEVAQKRQNITENKVEVSAKIVQGDEDILSQIYKKKAETFVKSPLVGMRTRYSIESEKESDKTAESKVVVQKIKLEEPKKFKKVDLFNMLSDDESGSGRTRTRSLASIKRAREKEKRKLVLQAPEKVYREVTIPEVIGVGDLANAMSERVADVIKELMNLGILANASQVIDADTAELVATNLGHKVKRVQESDVENVLISDDKVEDLRTRAPVVTVMGHVDHGKTSLLDALKSTDIAAGEIGGITQHIGAYRVTLADGRAITFIDTPGHEAFSEMRSRGTKVTDIAIIVVAADDGIKTQTVEAINHAKVAGVPIIIAINKIDKPNIDIERVKNELYIHEIIGEEAGGDVMVIPISALKKINLDKLEEAILLIAEMQDLKASPFGSAAGVVIESKIEKGRGTLTTILVQRGTLKNGDIIIAGTSYGKVKKMTNDKGLEIAEATPSVPVEIQGLNEVPFAGVKFNVVQNEKQAKDIAEYRMRLAKEKKISIAPRSSLEDLFLKASGNSKIKELPLIIKGDVHGSVEAILGSLLKLPSDEIKLRILHSGVGPITESDISLAHASSAIIVGFNVRAGVNALTAAEKAKIDIRYYSIIYNLIDDVKAIMSGMLDPIVREQYIGSVEIRRVFNVTKVGKIAGSYVTKGIIKKGADVRLLRDNIVIHEGKLKTLKRFKDEVKEVREGYECGIAFENYEDIRENDVVEVFELIQEQRQL</sequence>
<feature type="chain" id="PRO_1000008323" description="Translation initiation factor IF-2">
    <location>
        <begin position="1"/>
        <end position="833"/>
    </location>
</feature>
<feature type="domain" description="tr-type G">
    <location>
        <begin position="331"/>
        <end position="501"/>
    </location>
</feature>
<feature type="region of interest" description="G1" evidence="1">
    <location>
        <begin position="340"/>
        <end position="347"/>
    </location>
</feature>
<feature type="region of interest" description="G2" evidence="1">
    <location>
        <begin position="365"/>
        <end position="369"/>
    </location>
</feature>
<feature type="region of interest" description="G3" evidence="1">
    <location>
        <begin position="387"/>
        <end position="390"/>
    </location>
</feature>
<feature type="region of interest" description="G4" evidence="1">
    <location>
        <begin position="441"/>
        <end position="444"/>
    </location>
</feature>
<feature type="region of interest" description="G5" evidence="1">
    <location>
        <begin position="477"/>
        <end position="479"/>
    </location>
</feature>
<feature type="binding site" evidence="2">
    <location>
        <begin position="340"/>
        <end position="347"/>
    </location>
    <ligand>
        <name>GTP</name>
        <dbReference type="ChEBI" id="CHEBI:37565"/>
    </ligand>
</feature>
<feature type="binding site" evidence="2">
    <location>
        <begin position="387"/>
        <end position="391"/>
    </location>
    <ligand>
        <name>GTP</name>
        <dbReference type="ChEBI" id="CHEBI:37565"/>
    </ligand>
</feature>
<feature type="binding site" evidence="2">
    <location>
        <begin position="441"/>
        <end position="444"/>
    </location>
    <ligand>
        <name>GTP</name>
        <dbReference type="ChEBI" id="CHEBI:37565"/>
    </ligand>
</feature>
<name>IF2_RICCK</name>